<protein>
    <recommendedName>
        <fullName>Eukaryotic translation initiation factor 4E type 3</fullName>
        <shortName>eIF-4E type 3</shortName>
        <shortName>eIF-4E3</shortName>
        <shortName>eIF4E type 3</shortName>
        <shortName>eIF4E-3</shortName>
    </recommendedName>
</protein>
<evidence type="ECO:0000250" key="1"/>
<evidence type="ECO:0000256" key="2">
    <source>
        <dbReference type="SAM" id="MobiDB-lite"/>
    </source>
</evidence>
<evidence type="ECO:0000269" key="3">
    <source>
    </source>
</evidence>
<evidence type="ECO:0000305" key="4"/>
<evidence type="ECO:0007829" key="5">
    <source>
        <dbReference type="PDB" id="4B6U"/>
    </source>
</evidence>
<evidence type="ECO:0007829" key="6">
    <source>
        <dbReference type="PDB" id="4B6V"/>
    </source>
</evidence>
<keyword id="KW-0002">3D-structure</keyword>
<keyword id="KW-0396">Initiation factor</keyword>
<keyword id="KW-0648">Protein biosynthesis</keyword>
<keyword id="KW-1185">Reference proteome</keyword>
<keyword id="KW-0694">RNA-binding</keyword>
<keyword id="KW-0810">Translation regulation</keyword>
<gene>
    <name type="primary">Eif4e3</name>
</gene>
<name>IF4E3_MOUSE</name>
<sequence>MALPPAAAPPGANEPLDKALSALPPEPGGVPLHSPWTFWLDRSLPGATAAECASNLKKIYTVQTVQIFWSVYNNIPPVTSLPLRCSYHLMRGERRPLWEEESNAKGGVWKMKVPKDSTSTVWKELLLATIGEQFTDCAAADDEIIGVSVSVRDREDVVQVWNVNASLVGEATVLEKIHQLLPHIAFKAVFYKPHEEHHAFEGGRGKH</sequence>
<accession>Q9DBB5</accession>
<accession>Q9D983</accession>
<dbReference type="EMBL" id="AY628329">
    <property type="protein sequence ID" value="AAT45741.1"/>
    <property type="molecule type" value="mRNA"/>
</dbReference>
<dbReference type="EMBL" id="AK005054">
    <property type="protein sequence ID" value="BAB23780.1"/>
    <property type="molecule type" value="mRNA"/>
</dbReference>
<dbReference type="EMBL" id="AK007268">
    <property type="protein sequence ID" value="BAB24928.1"/>
    <property type="molecule type" value="mRNA"/>
</dbReference>
<dbReference type="EMBL" id="BC027014">
    <property type="protein sequence ID" value="AAH27014.1"/>
    <property type="molecule type" value="mRNA"/>
</dbReference>
<dbReference type="CCDS" id="CCDS20386.1"/>
<dbReference type="RefSeq" id="NP_080105.1">
    <property type="nucleotide sequence ID" value="NM_025829.4"/>
</dbReference>
<dbReference type="PDB" id="4B6U">
    <property type="method" value="NMR"/>
    <property type="chains" value="A=1-207"/>
</dbReference>
<dbReference type="PDB" id="4B6V">
    <property type="method" value="NMR"/>
    <property type="chains" value="A=1-207"/>
</dbReference>
<dbReference type="PDBsum" id="4B6U"/>
<dbReference type="PDBsum" id="4B6V"/>
<dbReference type="BMRB" id="Q9DBB5"/>
<dbReference type="SMR" id="Q9DBB5"/>
<dbReference type="BioGRID" id="211792">
    <property type="interactions" value="2"/>
</dbReference>
<dbReference type="FunCoup" id="Q9DBB5">
    <property type="interactions" value="108"/>
</dbReference>
<dbReference type="STRING" id="10090.ENSMUSP00000032151"/>
<dbReference type="iPTMnet" id="Q9DBB5"/>
<dbReference type="PhosphoSitePlus" id="Q9DBB5"/>
<dbReference type="REPRODUCTION-2DPAGE" id="Q9DBB5"/>
<dbReference type="PaxDb" id="10090-ENSMUSP00000032151"/>
<dbReference type="PeptideAtlas" id="Q9DBB5"/>
<dbReference type="ProteomicsDB" id="269376"/>
<dbReference type="Antibodypedia" id="31921">
    <property type="antibodies" value="122 antibodies from 25 providers"/>
</dbReference>
<dbReference type="DNASU" id="66892"/>
<dbReference type="Ensembl" id="ENSMUST00000032151.3">
    <property type="protein sequence ID" value="ENSMUSP00000032151.3"/>
    <property type="gene ID" value="ENSMUSG00000093661.2"/>
</dbReference>
<dbReference type="GeneID" id="66892"/>
<dbReference type="KEGG" id="mmu:66892"/>
<dbReference type="UCSC" id="uc009dbr.1">
    <property type="organism name" value="mouse"/>
</dbReference>
<dbReference type="AGR" id="MGI:1914142"/>
<dbReference type="CTD" id="317649"/>
<dbReference type="MGI" id="MGI:1914142">
    <property type="gene designation" value="Eif4e3"/>
</dbReference>
<dbReference type="VEuPathDB" id="HostDB:ENSMUSG00000093661"/>
<dbReference type="eggNOG" id="ENOG502QPP4">
    <property type="taxonomic scope" value="Eukaryota"/>
</dbReference>
<dbReference type="GeneTree" id="ENSGT00940000155865"/>
<dbReference type="HOGENOM" id="CLU_043552_5_1_1"/>
<dbReference type="InParanoid" id="Q9DBB5"/>
<dbReference type="OMA" id="LPLQYHW"/>
<dbReference type="OrthoDB" id="17977at2759"/>
<dbReference type="PhylomeDB" id="Q9DBB5"/>
<dbReference type="Reactome" id="R-MMU-1169408">
    <property type="pathway name" value="ISG15 antiviral mechanism"/>
</dbReference>
<dbReference type="BioGRID-ORCS" id="66892">
    <property type="hits" value="1 hit in 77 CRISPR screens"/>
</dbReference>
<dbReference type="ChiTaRS" id="Eif4e3">
    <property type="organism name" value="mouse"/>
</dbReference>
<dbReference type="EvolutionaryTrace" id="Q9DBB5"/>
<dbReference type="PRO" id="PR:Q9DBB5"/>
<dbReference type="Proteomes" id="UP000000589">
    <property type="component" value="Chromosome 6"/>
</dbReference>
<dbReference type="RNAct" id="Q9DBB5">
    <property type="molecule type" value="protein"/>
</dbReference>
<dbReference type="Bgee" id="ENSMUSG00000093661">
    <property type="expression patterns" value="Expressed in primary oocyte and 244 other cell types or tissues"/>
</dbReference>
<dbReference type="GO" id="GO:0003723">
    <property type="term" value="F:RNA binding"/>
    <property type="evidence" value="ECO:0007669"/>
    <property type="project" value="UniProtKB-KW"/>
</dbReference>
<dbReference type="GO" id="GO:0003743">
    <property type="term" value="F:translation initiation factor activity"/>
    <property type="evidence" value="ECO:0007669"/>
    <property type="project" value="UniProtKB-KW"/>
</dbReference>
<dbReference type="GO" id="GO:0006417">
    <property type="term" value="P:regulation of translation"/>
    <property type="evidence" value="ECO:0007669"/>
    <property type="project" value="UniProtKB-KW"/>
</dbReference>
<dbReference type="FunFam" id="3.30.760.10:FF:000007">
    <property type="entry name" value="Eukaryotic translation initiation factor 4E family member 3"/>
    <property type="match status" value="1"/>
</dbReference>
<dbReference type="Gene3D" id="3.30.760.10">
    <property type="entry name" value="RNA Cap, Translation Initiation Factor Eif4e"/>
    <property type="match status" value="1"/>
</dbReference>
<dbReference type="InterPro" id="IPR023398">
    <property type="entry name" value="TIF_eIF4e-like"/>
</dbReference>
<dbReference type="InterPro" id="IPR001040">
    <property type="entry name" value="TIF_eIF_4E"/>
</dbReference>
<dbReference type="PANTHER" id="PTHR11960">
    <property type="entry name" value="EUKARYOTIC TRANSLATION INITIATION FACTOR 4E RELATED"/>
    <property type="match status" value="1"/>
</dbReference>
<dbReference type="PANTHER" id="PTHR11960:SF66">
    <property type="entry name" value="EUKARYOTIC TRANSLATION INITIATION FACTOR 4E TYPE 3"/>
    <property type="match status" value="1"/>
</dbReference>
<dbReference type="Pfam" id="PF01652">
    <property type="entry name" value="IF4E"/>
    <property type="match status" value="1"/>
</dbReference>
<dbReference type="SUPFAM" id="SSF55418">
    <property type="entry name" value="eIF4e-like"/>
    <property type="match status" value="1"/>
</dbReference>
<feature type="chain" id="PRO_0000287698" description="Eukaryotic translation initiation factor 4E type 3">
    <location>
        <begin position="1"/>
        <end position="207"/>
    </location>
</feature>
<feature type="region of interest" description="Disordered" evidence="2">
    <location>
        <begin position="1"/>
        <end position="24"/>
    </location>
</feature>
<feature type="compositionally biased region" description="Low complexity" evidence="2">
    <location>
        <begin position="1"/>
        <end position="14"/>
    </location>
</feature>
<feature type="binding site" evidence="1">
    <location>
        <begin position="98"/>
        <end position="99"/>
    </location>
    <ligand>
        <name>mRNA</name>
        <dbReference type="ChEBI" id="CHEBI:33699"/>
    </ligand>
    <ligandPart>
        <name>N(7)-methylguanosine 5'-triphosphate group</name>
        <dbReference type="ChEBI" id="CHEBI:74429"/>
        <note>m7GTP residue in mRNA cap</note>
    </ligandPart>
</feature>
<feature type="binding site" evidence="1">
    <location>
        <begin position="152"/>
        <end position="157"/>
    </location>
    <ligand>
        <name>mRNA</name>
        <dbReference type="ChEBI" id="CHEBI:33699"/>
    </ligand>
    <ligandPart>
        <name>N(7)-methylguanosine 5'-triphosphate group</name>
        <dbReference type="ChEBI" id="CHEBI:74429"/>
        <note>m7GTP residue in mRNA cap</note>
    </ligandPart>
</feature>
<feature type="sequence conflict" description="In Ref. 2; BAB24928." evidence="4" ref="2">
    <original>W</original>
    <variation>G</variation>
    <location>
        <position position="122"/>
    </location>
</feature>
<feature type="strand" evidence="6">
    <location>
        <begin position="12"/>
        <end position="15"/>
    </location>
</feature>
<feature type="turn" evidence="5">
    <location>
        <begin position="17"/>
        <end position="20"/>
    </location>
</feature>
<feature type="strand" evidence="5">
    <location>
        <begin position="24"/>
        <end position="27"/>
    </location>
</feature>
<feature type="strand" evidence="5">
    <location>
        <begin position="31"/>
        <end position="41"/>
    </location>
</feature>
<feature type="helix" evidence="5">
    <location>
        <begin position="49"/>
        <end position="55"/>
    </location>
</feature>
<feature type="strand" evidence="5">
    <location>
        <begin position="57"/>
        <end position="64"/>
    </location>
</feature>
<feature type="helix" evidence="5">
    <location>
        <begin position="65"/>
        <end position="74"/>
    </location>
</feature>
<feature type="helix" evidence="5">
    <location>
        <begin position="78"/>
        <end position="80"/>
    </location>
</feature>
<feature type="strand" evidence="5">
    <location>
        <begin position="83"/>
        <end position="93"/>
    </location>
</feature>
<feature type="helix" evidence="5">
    <location>
        <begin position="97"/>
        <end position="99"/>
    </location>
</feature>
<feature type="turn" evidence="5">
    <location>
        <begin position="101"/>
        <end position="105"/>
    </location>
</feature>
<feature type="strand" evidence="5">
    <location>
        <begin position="107"/>
        <end position="113"/>
    </location>
</feature>
<feature type="turn" evidence="5">
    <location>
        <begin position="115"/>
        <end position="117"/>
    </location>
</feature>
<feature type="helix" evidence="5">
    <location>
        <begin position="118"/>
        <end position="129"/>
    </location>
</feature>
<feature type="turn" evidence="5">
    <location>
        <begin position="130"/>
        <end position="132"/>
    </location>
</feature>
<feature type="helix" evidence="5">
    <location>
        <begin position="134"/>
        <end position="137"/>
    </location>
</feature>
<feature type="strand" evidence="5">
    <location>
        <begin position="144"/>
        <end position="151"/>
    </location>
</feature>
<feature type="strand" evidence="5">
    <location>
        <begin position="156"/>
        <end position="163"/>
    </location>
</feature>
<feature type="helix" evidence="5">
    <location>
        <begin position="165"/>
        <end position="167"/>
    </location>
</feature>
<feature type="turn" evidence="5">
    <location>
        <begin position="168"/>
        <end position="170"/>
    </location>
</feature>
<feature type="helix" evidence="5">
    <location>
        <begin position="173"/>
        <end position="180"/>
    </location>
</feature>
<feature type="strand" evidence="5">
    <location>
        <begin position="187"/>
        <end position="193"/>
    </location>
</feature>
<feature type="turn" evidence="5">
    <location>
        <begin position="194"/>
        <end position="196"/>
    </location>
</feature>
<proteinExistence type="evidence at protein level"/>
<organism>
    <name type="scientific">Mus musculus</name>
    <name type="common">Mouse</name>
    <dbReference type="NCBI Taxonomy" id="10090"/>
    <lineage>
        <taxon>Eukaryota</taxon>
        <taxon>Metazoa</taxon>
        <taxon>Chordata</taxon>
        <taxon>Craniata</taxon>
        <taxon>Vertebrata</taxon>
        <taxon>Euteleostomi</taxon>
        <taxon>Mammalia</taxon>
        <taxon>Eutheria</taxon>
        <taxon>Euarchontoglires</taxon>
        <taxon>Glires</taxon>
        <taxon>Rodentia</taxon>
        <taxon>Myomorpha</taxon>
        <taxon>Muroidea</taxon>
        <taxon>Muridae</taxon>
        <taxon>Murinae</taxon>
        <taxon>Mus</taxon>
        <taxon>Mus</taxon>
    </lineage>
</organism>
<reference key="1">
    <citation type="journal article" date="2004" name="Eur. J. Biochem.">
        <title>Characterization of mammalian eIF4E-family members.</title>
        <authorList>
            <person name="Joshi B."/>
            <person name="Cameron A."/>
            <person name="Jagus R."/>
        </authorList>
    </citation>
    <scope>NUCLEOTIDE SEQUENCE [MRNA]</scope>
    <scope>FUNCTION</scope>
    <scope>TISSUE SPECIFICITY</scope>
    <scope>INTERACTION WITH EIF4G1</scope>
    <source>
        <strain>Czech II</strain>
        <tissue>Lung tumor</tissue>
    </source>
</reference>
<reference key="2">
    <citation type="journal article" date="2005" name="Science">
        <title>The transcriptional landscape of the mammalian genome.</title>
        <authorList>
            <person name="Carninci P."/>
            <person name="Kasukawa T."/>
            <person name="Katayama S."/>
            <person name="Gough J."/>
            <person name="Frith M.C."/>
            <person name="Maeda N."/>
            <person name="Oyama R."/>
            <person name="Ravasi T."/>
            <person name="Lenhard B."/>
            <person name="Wells C."/>
            <person name="Kodzius R."/>
            <person name="Shimokawa K."/>
            <person name="Bajic V.B."/>
            <person name="Brenner S.E."/>
            <person name="Batalov S."/>
            <person name="Forrest A.R."/>
            <person name="Zavolan M."/>
            <person name="Davis M.J."/>
            <person name="Wilming L.G."/>
            <person name="Aidinis V."/>
            <person name="Allen J.E."/>
            <person name="Ambesi-Impiombato A."/>
            <person name="Apweiler R."/>
            <person name="Aturaliya R.N."/>
            <person name="Bailey T.L."/>
            <person name="Bansal M."/>
            <person name="Baxter L."/>
            <person name="Beisel K.W."/>
            <person name="Bersano T."/>
            <person name="Bono H."/>
            <person name="Chalk A.M."/>
            <person name="Chiu K.P."/>
            <person name="Choudhary V."/>
            <person name="Christoffels A."/>
            <person name="Clutterbuck D.R."/>
            <person name="Crowe M.L."/>
            <person name="Dalla E."/>
            <person name="Dalrymple B.P."/>
            <person name="de Bono B."/>
            <person name="Della Gatta G."/>
            <person name="di Bernardo D."/>
            <person name="Down T."/>
            <person name="Engstrom P."/>
            <person name="Fagiolini M."/>
            <person name="Faulkner G."/>
            <person name="Fletcher C.F."/>
            <person name="Fukushima T."/>
            <person name="Furuno M."/>
            <person name="Futaki S."/>
            <person name="Gariboldi M."/>
            <person name="Georgii-Hemming P."/>
            <person name="Gingeras T.R."/>
            <person name="Gojobori T."/>
            <person name="Green R.E."/>
            <person name="Gustincich S."/>
            <person name="Harbers M."/>
            <person name="Hayashi Y."/>
            <person name="Hensch T.K."/>
            <person name="Hirokawa N."/>
            <person name="Hill D."/>
            <person name="Huminiecki L."/>
            <person name="Iacono M."/>
            <person name="Ikeo K."/>
            <person name="Iwama A."/>
            <person name="Ishikawa T."/>
            <person name="Jakt M."/>
            <person name="Kanapin A."/>
            <person name="Katoh M."/>
            <person name="Kawasawa Y."/>
            <person name="Kelso J."/>
            <person name="Kitamura H."/>
            <person name="Kitano H."/>
            <person name="Kollias G."/>
            <person name="Krishnan S.P."/>
            <person name="Kruger A."/>
            <person name="Kummerfeld S.K."/>
            <person name="Kurochkin I.V."/>
            <person name="Lareau L.F."/>
            <person name="Lazarevic D."/>
            <person name="Lipovich L."/>
            <person name="Liu J."/>
            <person name="Liuni S."/>
            <person name="McWilliam S."/>
            <person name="Madan Babu M."/>
            <person name="Madera M."/>
            <person name="Marchionni L."/>
            <person name="Matsuda H."/>
            <person name="Matsuzawa S."/>
            <person name="Miki H."/>
            <person name="Mignone F."/>
            <person name="Miyake S."/>
            <person name="Morris K."/>
            <person name="Mottagui-Tabar S."/>
            <person name="Mulder N."/>
            <person name="Nakano N."/>
            <person name="Nakauchi H."/>
            <person name="Ng P."/>
            <person name="Nilsson R."/>
            <person name="Nishiguchi S."/>
            <person name="Nishikawa S."/>
            <person name="Nori F."/>
            <person name="Ohara O."/>
            <person name="Okazaki Y."/>
            <person name="Orlando V."/>
            <person name="Pang K.C."/>
            <person name="Pavan W.J."/>
            <person name="Pavesi G."/>
            <person name="Pesole G."/>
            <person name="Petrovsky N."/>
            <person name="Piazza S."/>
            <person name="Reed J."/>
            <person name="Reid J.F."/>
            <person name="Ring B.Z."/>
            <person name="Ringwald M."/>
            <person name="Rost B."/>
            <person name="Ruan Y."/>
            <person name="Salzberg S.L."/>
            <person name="Sandelin A."/>
            <person name="Schneider C."/>
            <person name="Schoenbach C."/>
            <person name="Sekiguchi K."/>
            <person name="Semple C.A."/>
            <person name="Seno S."/>
            <person name="Sessa L."/>
            <person name="Sheng Y."/>
            <person name="Shibata Y."/>
            <person name="Shimada H."/>
            <person name="Shimada K."/>
            <person name="Silva D."/>
            <person name="Sinclair B."/>
            <person name="Sperling S."/>
            <person name="Stupka E."/>
            <person name="Sugiura K."/>
            <person name="Sultana R."/>
            <person name="Takenaka Y."/>
            <person name="Taki K."/>
            <person name="Tammoja K."/>
            <person name="Tan S.L."/>
            <person name="Tang S."/>
            <person name="Taylor M.S."/>
            <person name="Tegner J."/>
            <person name="Teichmann S.A."/>
            <person name="Ueda H.R."/>
            <person name="van Nimwegen E."/>
            <person name="Verardo R."/>
            <person name="Wei C.L."/>
            <person name="Yagi K."/>
            <person name="Yamanishi H."/>
            <person name="Zabarovsky E."/>
            <person name="Zhu S."/>
            <person name="Zimmer A."/>
            <person name="Hide W."/>
            <person name="Bult C."/>
            <person name="Grimmond S.M."/>
            <person name="Teasdale R.D."/>
            <person name="Liu E.T."/>
            <person name="Brusic V."/>
            <person name="Quackenbush J."/>
            <person name="Wahlestedt C."/>
            <person name="Mattick J.S."/>
            <person name="Hume D.A."/>
            <person name="Kai C."/>
            <person name="Sasaki D."/>
            <person name="Tomaru Y."/>
            <person name="Fukuda S."/>
            <person name="Kanamori-Katayama M."/>
            <person name="Suzuki M."/>
            <person name="Aoki J."/>
            <person name="Arakawa T."/>
            <person name="Iida J."/>
            <person name="Imamura K."/>
            <person name="Itoh M."/>
            <person name="Kato T."/>
            <person name="Kawaji H."/>
            <person name="Kawagashira N."/>
            <person name="Kawashima T."/>
            <person name="Kojima M."/>
            <person name="Kondo S."/>
            <person name="Konno H."/>
            <person name="Nakano K."/>
            <person name="Ninomiya N."/>
            <person name="Nishio T."/>
            <person name="Okada M."/>
            <person name="Plessy C."/>
            <person name="Shibata K."/>
            <person name="Shiraki T."/>
            <person name="Suzuki S."/>
            <person name="Tagami M."/>
            <person name="Waki K."/>
            <person name="Watahiki A."/>
            <person name="Okamura-Oho Y."/>
            <person name="Suzuki H."/>
            <person name="Kawai J."/>
            <person name="Hayashizaki Y."/>
        </authorList>
    </citation>
    <scope>NUCLEOTIDE SEQUENCE [LARGE SCALE MRNA]</scope>
    <source>
        <strain>C57BL/6J</strain>
        <tissue>Liver</tissue>
        <tissue>Testis</tissue>
    </source>
</reference>
<reference key="3">
    <citation type="journal article" date="2004" name="Genome Res.">
        <title>The status, quality, and expansion of the NIH full-length cDNA project: the Mammalian Gene Collection (MGC).</title>
        <authorList>
            <consortium name="The MGC Project Team"/>
        </authorList>
    </citation>
    <scope>NUCLEOTIDE SEQUENCE [LARGE SCALE MRNA]</scope>
    <source>
        <strain>FVB/N-3</strain>
        <tissue>Mammary tumor</tissue>
    </source>
</reference>
<reference key="4">
    <citation type="journal article" date="2010" name="Cell">
        <title>A tissue-specific atlas of mouse protein phosphorylation and expression.</title>
        <authorList>
            <person name="Huttlin E.L."/>
            <person name="Jedrychowski M.P."/>
            <person name="Elias J.E."/>
            <person name="Goswami T."/>
            <person name="Rad R."/>
            <person name="Beausoleil S.A."/>
            <person name="Villen J."/>
            <person name="Haas W."/>
            <person name="Sowa M.E."/>
            <person name="Gygi S.P."/>
        </authorList>
    </citation>
    <scope>IDENTIFICATION BY MASS SPECTROMETRY [LARGE SCALE ANALYSIS]</scope>
    <source>
        <tissue>Lung</tissue>
    </source>
</reference>
<comment type="function">
    <text evidence="3">Recognizes and binds the 7-methylguanosine-containing mRNA cap during an early step in the initiation of protein synthesis. May act as an inhibitor of EIF4E1 activity.</text>
</comment>
<comment type="subunit">
    <text evidence="1 3">eIF4F is a multi-subunit complex, the composition of which varies with external and internal environmental conditions. It is composed of at least eIF4A, eIF4E and eIF4G (By similarity). EIF4E3 interacts with EIF4G1, but not with EIF4EBP1, EIF4EBP2 and EIF4EBP3.</text>
</comment>
<comment type="tissue specificity">
    <text evidence="3">Only expressed in heart, skeletal muscle, lung and spleen.</text>
</comment>
<comment type="similarity">
    <text evidence="4">Belongs to the eukaryotic initiation factor 4E family.</text>
</comment>